<comment type="function">
    <text evidence="1">One of the primary rRNA binding proteins, it binds directly to 16S rRNA where it helps nucleate assembly of the platform of the 30S subunit by binding and bridging several RNA helices of the 16S rRNA.</text>
</comment>
<comment type="function">
    <text evidence="1">Forms an intersubunit bridge (bridge B4) with the 23S rRNA of the 50S subunit in the ribosome.</text>
</comment>
<comment type="subunit">
    <text evidence="1">Part of the 30S ribosomal subunit. Forms a bridge to the 50S subunit in the 70S ribosome, contacting the 23S rRNA.</text>
</comment>
<comment type="similarity">
    <text evidence="1">Belongs to the universal ribosomal protein uS15 family.</text>
</comment>
<feature type="chain" id="PRO_1000054861" description="Small ribosomal subunit protein uS15">
    <location>
        <begin position="1"/>
        <end position="91"/>
    </location>
</feature>
<proteinExistence type="inferred from homology"/>
<sequence length="91" mass="10594">MSITTERKQQLIKEYAITENDTGSSAVQCAILTERINNLTEHFKSNHKDHTSRRGLLILVGRRRRLLNYIKKNNVSKYLDLISKLGIRKIK</sequence>
<reference key="1">
    <citation type="submission" date="2007-09" db="EMBL/GenBank/DDBJ databases">
        <title>Complete genome sequence of Rickettsia rickettsii.</title>
        <authorList>
            <person name="Madan A."/>
            <person name="Fahey J."/>
            <person name="Helton E."/>
            <person name="Ketteman M."/>
            <person name="Madan A."/>
            <person name="Rodrigues S."/>
            <person name="Sanchez A."/>
            <person name="Dasch G."/>
            <person name="Eremeeva M."/>
        </authorList>
    </citation>
    <scope>NUCLEOTIDE SEQUENCE [LARGE SCALE GENOMIC DNA]</scope>
    <source>
        <strain>Sheila Smith</strain>
    </source>
</reference>
<evidence type="ECO:0000255" key="1">
    <source>
        <dbReference type="HAMAP-Rule" id="MF_01343"/>
    </source>
</evidence>
<evidence type="ECO:0000305" key="2"/>
<accession>A8GS97</accession>
<organism>
    <name type="scientific">Rickettsia rickettsii (strain Sheila Smith)</name>
    <dbReference type="NCBI Taxonomy" id="392021"/>
    <lineage>
        <taxon>Bacteria</taxon>
        <taxon>Pseudomonadati</taxon>
        <taxon>Pseudomonadota</taxon>
        <taxon>Alphaproteobacteria</taxon>
        <taxon>Rickettsiales</taxon>
        <taxon>Rickettsiaceae</taxon>
        <taxon>Rickettsieae</taxon>
        <taxon>Rickettsia</taxon>
        <taxon>spotted fever group</taxon>
    </lineage>
</organism>
<protein>
    <recommendedName>
        <fullName evidence="1">Small ribosomal subunit protein uS15</fullName>
    </recommendedName>
    <alternativeName>
        <fullName evidence="2">30S ribosomal protein S15</fullName>
    </alternativeName>
</protein>
<name>RS15_RICRS</name>
<dbReference type="EMBL" id="CP000848">
    <property type="protein sequence ID" value="ABV76272.1"/>
    <property type="molecule type" value="Genomic_DNA"/>
</dbReference>
<dbReference type="RefSeq" id="WP_004995678.1">
    <property type="nucleotide sequence ID" value="NC_009882.1"/>
</dbReference>
<dbReference type="SMR" id="A8GS97"/>
<dbReference type="GeneID" id="34513752"/>
<dbReference type="GeneID" id="95362261"/>
<dbReference type="KEGG" id="rri:A1G_03775"/>
<dbReference type="HOGENOM" id="CLU_148518_0_0_5"/>
<dbReference type="Proteomes" id="UP000006832">
    <property type="component" value="Chromosome"/>
</dbReference>
<dbReference type="GO" id="GO:0022627">
    <property type="term" value="C:cytosolic small ribosomal subunit"/>
    <property type="evidence" value="ECO:0007669"/>
    <property type="project" value="TreeGrafter"/>
</dbReference>
<dbReference type="GO" id="GO:0019843">
    <property type="term" value="F:rRNA binding"/>
    <property type="evidence" value="ECO:0007669"/>
    <property type="project" value="UniProtKB-UniRule"/>
</dbReference>
<dbReference type="GO" id="GO:0003735">
    <property type="term" value="F:structural constituent of ribosome"/>
    <property type="evidence" value="ECO:0007669"/>
    <property type="project" value="InterPro"/>
</dbReference>
<dbReference type="GO" id="GO:0006412">
    <property type="term" value="P:translation"/>
    <property type="evidence" value="ECO:0007669"/>
    <property type="project" value="UniProtKB-UniRule"/>
</dbReference>
<dbReference type="CDD" id="cd00353">
    <property type="entry name" value="Ribosomal_S15p_S13e"/>
    <property type="match status" value="1"/>
</dbReference>
<dbReference type="FunFam" id="1.10.287.10:FF:000002">
    <property type="entry name" value="30S ribosomal protein S15"/>
    <property type="match status" value="1"/>
</dbReference>
<dbReference type="Gene3D" id="6.10.250.3130">
    <property type="match status" value="1"/>
</dbReference>
<dbReference type="Gene3D" id="1.10.287.10">
    <property type="entry name" value="S15/NS1, RNA-binding"/>
    <property type="match status" value="1"/>
</dbReference>
<dbReference type="HAMAP" id="MF_01343_B">
    <property type="entry name" value="Ribosomal_uS15_B"/>
    <property type="match status" value="1"/>
</dbReference>
<dbReference type="InterPro" id="IPR000589">
    <property type="entry name" value="Ribosomal_uS15"/>
</dbReference>
<dbReference type="InterPro" id="IPR005290">
    <property type="entry name" value="Ribosomal_uS15_bac-type"/>
</dbReference>
<dbReference type="InterPro" id="IPR009068">
    <property type="entry name" value="uS15_NS1_RNA-bd_sf"/>
</dbReference>
<dbReference type="NCBIfam" id="TIGR00952">
    <property type="entry name" value="S15_bact"/>
    <property type="match status" value="1"/>
</dbReference>
<dbReference type="PANTHER" id="PTHR23321">
    <property type="entry name" value="RIBOSOMAL PROTEIN S15, BACTERIAL AND ORGANELLAR"/>
    <property type="match status" value="1"/>
</dbReference>
<dbReference type="PANTHER" id="PTHR23321:SF26">
    <property type="entry name" value="SMALL RIBOSOMAL SUBUNIT PROTEIN US15M"/>
    <property type="match status" value="1"/>
</dbReference>
<dbReference type="Pfam" id="PF00312">
    <property type="entry name" value="Ribosomal_S15"/>
    <property type="match status" value="1"/>
</dbReference>
<dbReference type="SMART" id="SM01387">
    <property type="entry name" value="Ribosomal_S15"/>
    <property type="match status" value="1"/>
</dbReference>
<dbReference type="SUPFAM" id="SSF47060">
    <property type="entry name" value="S15/NS1 RNA-binding domain"/>
    <property type="match status" value="1"/>
</dbReference>
<dbReference type="PROSITE" id="PS00362">
    <property type="entry name" value="RIBOSOMAL_S15"/>
    <property type="match status" value="1"/>
</dbReference>
<keyword id="KW-0687">Ribonucleoprotein</keyword>
<keyword id="KW-0689">Ribosomal protein</keyword>
<keyword id="KW-0694">RNA-binding</keyword>
<keyword id="KW-0699">rRNA-binding</keyword>
<gene>
    <name evidence="1" type="primary">rpsO</name>
    <name type="ordered locus">A1G_03775</name>
</gene>